<name>ENTM_BACFG</name>
<reference key="1">
    <citation type="journal article" date="1997" name="FEMS Microbiol. Lett.">
        <title>Cloning and characterization of the gene for the metalloprotease enterotoxin of Bacteroides fragilis.</title>
        <authorList>
            <person name="Kling J.J."/>
            <person name="Wright R.L."/>
            <person name="Moncrief J.S."/>
            <person name="Wilkins T.D."/>
        </authorList>
    </citation>
    <scope>NUCLEOTIDE SEQUENCE [GENOMIC DNA]</scope>
    <source>
        <strain>VPI 13784</strain>
    </source>
</reference>
<reference key="2">
    <citation type="journal article" date="1995" name="Infect. Immun.">
        <title>The enterotoxin of Bacteroides fragilis is a metalloprotease.</title>
        <authorList>
            <person name="Moncrief J.S."/>
            <person name="Obiso R.J. Jr."/>
            <person name="Barroso L.A."/>
            <person name="Kling J.J."/>
            <person name="Wright R.L."/>
            <person name="van Tassell R.L."/>
            <person name="Lyerly D.M."/>
            <person name="Wilkins T.D."/>
        </authorList>
    </citation>
    <scope>NUCLEOTIDE SEQUENCE [GENOMIC DNA] OF 224-402</scope>
    <source>
        <strain>VPI 13784</strain>
    </source>
</reference>
<reference key="3">
    <citation type="journal article" date="1997" name="Clin. Infect. Dis.">
        <title>Molecular modeling and analysis of fragilysin, the Bacteroides fragilis toxin.</title>
        <authorList>
            <person name="Obiso R.J. Jr."/>
            <person name="Bevan D.R."/>
            <person name="Wilkins T.D."/>
        </authorList>
    </citation>
    <scope>3D-STRUCTURE MODELING</scope>
</reference>
<organism>
    <name type="scientific">Bacteroides fragilis</name>
    <dbReference type="NCBI Taxonomy" id="817"/>
    <lineage>
        <taxon>Bacteria</taxon>
        <taxon>Pseudomonadati</taxon>
        <taxon>Bacteroidota</taxon>
        <taxon>Bacteroidia</taxon>
        <taxon>Bacteroidales</taxon>
        <taxon>Bacteroidaceae</taxon>
        <taxon>Bacteroides</taxon>
    </lineage>
</organism>
<comment type="function">
    <text>Diarrheal toxin that hydrolyzes gelatin, azocoll, actin, tropomyosin, and fibrinogen.</text>
</comment>
<comment type="catalytic activity">
    <reaction>
        <text>Broad proteolytic specificity, bonds hydrolyzed includes -Gly-|-Leu-, -Met-|-Leu-, -Phe-|-Leu-, -Cys-|-Leu-, -Leu-|-Gly-.</text>
        <dbReference type="EC" id="3.4.24.74"/>
    </reaction>
</comment>
<comment type="cofactor">
    <cofactor evidence="1">
        <name>Zn(2+)</name>
        <dbReference type="ChEBI" id="CHEBI:29105"/>
    </cofactor>
    <text evidence="1">Binds 1 zinc ion per subunit.</text>
</comment>
<comment type="biophysicochemical properties">
    <phDependence>
        <text>Optimum pH is 6.5.</text>
    </phDependence>
    <temperatureDependence>
        <text>Optimum temperature is 37 degrees Celsius.</text>
    </temperatureDependence>
</comment>
<comment type="subcellular location">
    <subcellularLocation>
        <location>Secreted</location>
    </subcellularLocation>
</comment>
<comment type="similarity">
    <text evidence="4">Belongs to the peptidase M10C family.</text>
</comment>
<proteinExistence type="evidence at protein level"/>
<evidence type="ECO:0000250" key="1"/>
<evidence type="ECO:0000255" key="2"/>
<evidence type="ECO:0000255" key="3">
    <source>
        <dbReference type="PROSITE-ProRule" id="PRU10095"/>
    </source>
</evidence>
<evidence type="ECO:0000305" key="4"/>
<evidence type="ECO:0007829" key="5">
    <source>
        <dbReference type="PDB" id="8H3X"/>
    </source>
</evidence>
<evidence type="ECO:0007829" key="6">
    <source>
        <dbReference type="PDB" id="8H3Y"/>
    </source>
</evidence>
<evidence type="ECO:0007829" key="7">
    <source>
        <dbReference type="PDB" id="8WEO"/>
    </source>
</evidence>
<dbReference type="EC" id="3.4.24.74"/>
<dbReference type="EMBL" id="U67735">
    <property type="protein sequence ID" value="AAB49835.1"/>
    <property type="molecule type" value="Genomic_DNA"/>
</dbReference>
<dbReference type="EMBL" id="S75941">
    <property type="protein sequence ID" value="AAB32890.2"/>
    <property type="molecule type" value="Genomic_DNA"/>
</dbReference>
<dbReference type="PDB" id="8H3X">
    <property type="method" value="X-ray"/>
    <property type="resolution" value="1.66 A"/>
    <property type="chains" value="C=9-405"/>
</dbReference>
<dbReference type="PDB" id="8H3Y">
    <property type="method" value="X-ray"/>
    <property type="resolution" value="2.25 A"/>
    <property type="chains" value="A/B/C=9-405"/>
</dbReference>
<dbReference type="PDB" id="8WEM">
    <property type="method" value="X-ray"/>
    <property type="resolution" value="1.80 A"/>
    <property type="chains" value="A/C=9-405"/>
</dbReference>
<dbReference type="PDB" id="8WEO">
    <property type="method" value="X-ray"/>
    <property type="resolution" value="1.50 A"/>
    <property type="chains" value="A/B=220-405"/>
</dbReference>
<dbReference type="PDBsum" id="8H3X"/>
<dbReference type="PDBsum" id="8H3Y"/>
<dbReference type="PDBsum" id="8WEM"/>
<dbReference type="PDBsum" id="8WEO"/>
<dbReference type="SMR" id="P54355"/>
<dbReference type="MEROPS" id="M10.020"/>
<dbReference type="KEGG" id="ag:AAB49835"/>
<dbReference type="GO" id="GO:0005576">
    <property type="term" value="C:extracellular region"/>
    <property type="evidence" value="ECO:0007669"/>
    <property type="project" value="UniProtKB-SubCell"/>
</dbReference>
<dbReference type="GO" id="GO:0008237">
    <property type="term" value="F:metallopeptidase activity"/>
    <property type="evidence" value="ECO:0007669"/>
    <property type="project" value="UniProtKB-KW"/>
</dbReference>
<dbReference type="GO" id="GO:0090729">
    <property type="term" value="F:toxin activity"/>
    <property type="evidence" value="ECO:0007669"/>
    <property type="project" value="UniProtKB-KW"/>
</dbReference>
<dbReference type="GO" id="GO:0008270">
    <property type="term" value="F:zinc ion binding"/>
    <property type="evidence" value="ECO:0007669"/>
    <property type="project" value="InterPro"/>
</dbReference>
<dbReference type="GO" id="GO:0006508">
    <property type="term" value="P:proteolysis"/>
    <property type="evidence" value="ECO:0007669"/>
    <property type="project" value="UniProtKB-KW"/>
</dbReference>
<dbReference type="GO" id="GO:0141139">
    <property type="term" value="P:symbiont-mediated disruption of host mucosa"/>
    <property type="evidence" value="ECO:0000269"/>
    <property type="project" value="SigSci"/>
</dbReference>
<dbReference type="Gene3D" id="2.40.128.470">
    <property type="match status" value="1"/>
</dbReference>
<dbReference type="Gene3D" id="3.40.390.10">
    <property type="entry name" value="Collagenase (Catalytic Domain)"/>
    <property type="match status" value="1"/>
</dbReference>
<dbReference type="InterPro" id="IPR001843">
    <property type="entry name" value="Fragilysin"/>
</dbReference>
<dbReference type="InterPro" id="IPR032273">
    <property type="entry name" value="Fragilysin_N"/>
</dbReference>
<dbReference type="InterPro" id="IPR038176">
    <property type="entry name" value="Fragilysin_N_sf"/>
</dbReference>
<dbReference type="InterPro" id="IPR024079">
    <property type="entry name" value="MetalloPept_cat_dom_sf"/>
</dbReference>
<dbReference type="InterPro" id="IPR006026">
    <property type="entry name" value="Peptidase_Metallo"/>
</dbReference>
<dbReference type="NCBIfam" id="TIGR03935">
    <property type="entry name" value="fragilysin"/>
    <property type="match status" value="1"/>
</dbReference>
<dbReference type="Pfam" id="PF16376">
    <property type="entry name" value="fragilysinNterm"/>
    <property type="match status" value="1"/>
</dbReference>
<dbReference type="Pfam" id="PF13688">
    <property type="entry name" value="Reprolysin_5"/>
    <property type="match status" value="1"/>
</dbReference>
<dbReference type="PRINTS" id="PR00997">
    <property type="entry name" value="FRAGILYSIN"/>
</dbReference>
<dbReference type="SMART" id="SM00235">
    <property type="entry name" value="ZnMc"/>
    <property type="match status" value="1"/>
</dbReference>
<dbReference type="SUPFAM" id="SSF55486">
    <property type="entry name" value="Metalloproteases ('zincins'), catalytic domain"/>
    <property type="match status" value="1"/>
</dbReference>
<dbReference type="PROSITE" id="PS00142">
    <property type="entry name" value="ZINC_PROTEASE"/>
    <property type="match status" value="1"/>
</dbReference>
<keyword id="KW-0002">3D-structure</keyword>
<keyword id="KW-0378">Hydrolase</keyword>
<keyword id="KW-0479">Metal-binding</keyword>
<keyword id="KW-0482">Metalloprotease</keyword>
<keyword id="KW-0645">Protease</keyword>
<keyword id="KW-0964">Secreted</keyword>
<keyword id="KW-0732">Signal</keyword>
<keyword id="KW-0800">Toxin</keyword>
<keyword id="KW-0843">Virulence</keyword>
<keyword id="KW-0862">Zinc</keyword>
<sequence length="405" mass="45411">MFILNFNKMKNVKLLLMLGTAALLAACSNEADSLTTSIDAPVTASIDLQSVSYTDLATQLNDVSDFGKMIILKDNGFNRQVHVSMDKRTKIQLDNENVRLFNGRDKDSTSFILGDEFAVLRFYRNGESISYIAYKEAQMMNEIAEFYAAPFKKTRAINEKEAFECIYDSRTRSAGKDIVSVKINIDKAKKILNLPECDYINDYIKTPQVPHGITESQTRAVPSEPKTVYVICLRENGSTIYPNEVSAQMQDAANSVYAVHGLKRYVNFHFVLYTTEYSCPSGDAKEGLEGFTASLKSNPKAEGYDDQIYFLIRWGTWDNKILGMSWFNSYNVNTASDFEASGMSTTQLMYPGVMAHELGHILGAEHTDNSKDLMYATFTGYLSHLSEKNMDIIAKNLGWEAADGD</sequence>
<accession>P54355</accession>
<gene>
    <name type="primary">btfP</name>
</gene>
<protein>
    <recommendedName>
        <fullName>Fragilysin</fullName>
        <ecNumber>3.4.24.74</ecNumber>
    </recommendedName>
    <alternativeName>
        <fullName>Enterotoxin</fullName>
    </alternativeName>
</protein>
<feature type="signal peptide" evidence="2">
    <location>
        <begin position="1"/>
        <end position="25"/>
    </location>
</feature>
<feature type="chain" id="PRO_0000028869" description="Fragilysin">
    <location>
        <begin position="26"/>
        <end position="405"/>
    </location>
</feature>
<feature type="active site" evidence="3">
    <location>
        <position position="357"/>
    </location>
</feature>
<feature type="binding site" evidence="3">
    <location>
        <position position="356"/>
    </location>
    <ligand>
        <name>Zn(2+)</name>
        <dbReference type="ChEBI" id="CHEBI:29105"/>
        <note>catalytic</note>
    </ligand>
</feature>
<feature type="binding site" evidence="3">
    <location>
        <position position="360"/>
    </location>
    <ligand>
        <name>Zn(2+)</name>
        <dbReference type="ChEBI" id="CHEBI:29105"/>
        <note>catalytic</note>
    </ligand>
</feature>
<feature type="binding site" evidence="3">
    <location>
        <position position="366"/>
    </location>
    <ligand>
        <name>Zn(2+)</name>
        <dbReference type="ChEBI" id="CHEBI:29105"/>
        <note>catalytic</note>
    </ligand>
</feature>
<feature type="sequence conflict" description="In Ref. 2; AAB32890." evidence="4" ref="2">
    <original>W</original>
    <variation>C</variation>
    <location>
        <position position="314"/>
    </location>
</feature>
<feature type="strand" evidence="5">
    <location>
        <begin position="44"/>
        <end position="47"/>
    </location>
</feature>
<feature type="turn" evidence="5">
    <location>
        <begin position="48"/>
        <end position="50"/>
    </location>
</feature>
<feature type="helix" evidence="5">
    <location>
        <begin position="53"/>
        <end position="61"/>
    </location>
</feature>
<feature type="strand" evidence="5">
    <location>
        <begin position="68"/>
        <end position="74"/>
    </location>
</feature>
<feature type="strand" evidence="5">
    <location>
        <begin position="77"/>
        <end position="85"/>
    </location>
</feature>
<feature type="strand" evidence="5">
    <location>
        <begin position="90"/>
        <end position="92"/>
    </location>
</feature>
<feature type="strand" evidence="5">
    <location>
        <begin position="97"/>
        <end position="102"/>
    </location>
</feature>
<feature type="helix" evidence="6">
    <location>
        <begin position="105"/>
        <end position="107"/>
    </location>
</feature>
<feature type="strand" evidence="5">
    <location>
        <begin position="110"/>
        <end position="124"/>
    </location>
</feature>
<feature type="strand" evidence="5">
    <location>
        <begin position="127"/>
        <end position="136"/>
    </location>
</feature>
<feature type="helix" evidence="5">
    <location>
        <begin position="137"/>
        <end position="148"/>
    </location>
</feature>
<feature type="helix" evidence="5">
    <location>
        <begin position="149"/>
        <end position="151"/>
    </location>
</feature>
<feature type="helix" evidence="5">
    <location>
        <begin position="159"/>
        <end position="162"/>
    </location>
</feature>
<feature type="strand" evidence="5">
    <location>
        <begin position="163"/>
        <end position="167"/>
    </location>
</feature>
<feature type="strand" evidence="5">
    <location>
        <begin position="178"/>
        <end position="184"/>
    </location>
</feature>
<feature type="helix" evidence="5">
    <location>
        <begin position="185"/>
        <end position="192"/>
    </location>
</feature>
<feature type="strand" evidence="6">
    <location>
        <begin position="203"/>
        <end position="205"/>
    </location>
</feature>
<feature type="strand" evidence="7">
    <location>
        <begin position="226"/>
        <end position="234"/>
    </location>
</feature>
<feature type="helix" evidence="7">
    <location>
        <begin position="242"/>
        <end position="257"/>
    </location>
</feature>
<feature type="turn" evidence="7">
    <location>
        <begin position="258"/>
        <end position="261"/>
    </location>
</feature>
<feature type="helix" evidence="7">
    <location>
        <begin position="262"/>
        <end position="264"/>
    </location>
</feature>
<feature type="strand" evidence="7">
    <location>
        <begin position="266"/>
        <end position="274"/>
    </location>
</feature>
<feature type="strand" evidence="7">
    <location>
        <begin position="280"/>
        <end position="282"/>
    </location>
</feature>
<feature type="helix" evidence="7">
    <location>
        <begin position="284"/>
        <end position="295"/>
    </location>
</feature>
<feature type="helix" evidence="7">
    <location>
        <begin position="299"/>
        <end position="301"/>
    </location>
</feature>
<feature type="strand" evidence="7">
    <location>
        <begin position="307"/>
        <end position="315"/>
    </location>
</feature>
<feature type="helix" evidence="7">
    <location>
        <begin position="318"/>
        <end position="320"/>
    </location>
</feature>
<feature type="strand" evidence="7">
    <location>
        <begin position="323"/>
        <end position="325"/>
    </location>
</feature>
<feature type="turn" evidence="7">
    <location>
        <begin position="332"/>
        <end position="334"/>
    </location>
</feature>
<feature type="strand" evidence="7">
    <location>
        <begin position="340"/>
        <end position="345"/>
    </location>
</feature>
<feature type="helix" evidence="7">
    <location>
        <begin position="353"/>
        <end position="361"/>
    </location>
</feature>
<feature type="strand" evidence="7">
    <location>
        <begin position="375"/>
        <end position="377"/>
    </location>
</feature>
<feature type="helix" evidence="7">
    <location>
        <begin position="387"/>
        <end position="395"/>
    </location>
</feature>
<feature type="turn" evidence="7">
    <location>
        <begin position="396"/>
        <end position="398"/>
    </location>
</feature>
<feature type="helix" evidence="7">
    <location>
        <begin position="401"/>
        <end position="403"/>
    </location>
</feature>